<evidence type="ECO:0000255" key="1">
    <source>
        <dbReference type="HAMAP-Rule" id="MF_00197"/>
    </source>
</evidence>
<name>DAPF_BACVZ</name>
<gene>
    <name evidence="1" type="primary">dapF</name>
    <name type="ordered locus">RBAM_029280</name>
</gene>
<comment type="function">
    <text evidence="1">Catalyzes the stereoinversion of LL-2,6-diaminopimelate (L,L-DAP) to meso-diaminopimelate (meso-DAP), a precursor of L-lysine and an essential component of the bacterial peptidoglycan.</text>
</comment>
<comment type="catalytic activity">
    <reaction evidence="1">
        <text>(2S,6S)-2,6-diaminopimelate = meso-2,6-diaminopimelate</text>
        <dbReference type="Rhea" id="RHEA:15393"/>
        <dbReference type="ChEBI" id="CHEBI:57609"/>
        <dbReference type="ChEBI" id="CHEBI:57791"/>
        <dbReference type="EC" id="5.1.1.7"/>
    </reaction>
</comment>
<comment type="pathway">
    <text evidence="1">Amino-acid biosynthesis; L-lysine biosynthesis via DAP pathway; DL-2,6-diaminopimelate from LL-2,6-diaminopimelate: step 1/1.</text>
</comment>
<comment type="subunit">
    <text evidence="1">Homodimer.</text>
</comment>
<comment type="subcellular location">
    <subcellularLocation>
        <location evidence="1">Cytoplasm</location>
    </subcellularLocation>
</comment>
<comment type="similarity">
    <text evidence="1">Belongs to the diaminopimelate epimerase family.</text>
</comment>
<dbReference type="EC" id="5.1.1.7" evidence="1"/>
<dbReference type="EMBL" id="CP000560">
    <property type="protein sequence ID" value="ABS75259.1"/>
    <property type="molecule type" value="Genomic_DNA"/>
</dbReference>
<dbReference type="RefSeq" id="WP_012118345.1">
    <property type="nucleotide sequence ID" value="NC_009725.2"/>
</dbReference>
<dbReference type="SMR" id="A7Z8D3"/>
<dbReference type="GeneID" id="93082072"/>
<dbReference type="KEGG" id="bay:RBAM_029280"/>
<dbReference type="HOGENOM" id="CLU_053306_3_0_9"/>
<dbReference type="UniPathway" id="UPA00034">
    <property type="reaction ID" value="UER00025"/>
</dbReference>
<dbReference type="Proteomes" id="UP000001120">
    <property type="component" value="Chromosome"/>
</dbReference>
<dbReference type="GO" id="GO:0005829">
    <property type="term" value="C:cytosol"/>
    <property type="evidence" value="ECO:0007669"/>
    <property type="project" value="TreeGrafter"/>
</dbReference>
<dbReference type="GO" id="GO:0008837">
    <property type="term" value="F:diaminopimelate epimerase activity"/>
    <property type="evidence" value="ECO:0007669"/>
    <property type="project" value="UniProtKB-UniRule"/>
</dbReference>
<dbReference type="GO" id="GO:0009089">
    <property type="term" value="P:lysine biosynthetic process via diaminopimelate"/>
    <property type="evidence" value="ECO:0007669"/>
    <property type="project" value="UniProtKB-UniRule"/>
</dbReference>
<dbReference type="FunFam" id="3.10.310.10:FF:000004">
    <property type="entry name" value="Diaminopimelate epimerase"/>
    <property type="match status" value="1"/>
</dbReference>
<dbReference type="FunFam" id="3.10.310.10:FF:000006">
    <property type="entry name" value="Diaminopimelate epimerase"/>
    <property type="match status" value="1"/>
</dbReference>
<dbReference type="Gene3D" id="3.10.310.10">
    <property type="entry name" value="Diaminopimelate Epimerase, Chain A, domain 1"/>
    <property type="match status" value="2"/>
</dbReference>
<dbReference type="HAMAP" id="MF_00197">
    <property type="entry name" value="DAP_epimerase"/>
    <property type="match status" value="1"/>
</dbReference>
<dbReference type="InterPro" id="IPR018510">
    <property type="entry name" value="DAP_epimerase_AS"/>
</dbReference>
<dbReference type="InterPro" id="IPR001653">
    <property type="entry name" value="DAP_epimerase_DapF"/>
</dbReference>
<dbReference type="NCBIfam" id="TIGR00652">
    <property type="entry name" value="DapF"/>
    <property type="match status" value="1"/>
</dbReference>
<dbReference type="PANTHER" id="PTHR31689:SF0">
    <property type="entry name" value="DIAMINOPIMELATE EPIMERASE"/>
    <property type="match status" value="1"/>
</dbReference>
<dbReference type="PANTHER" id="PTHR31689">
    <property type="entry name" value="DIAMINOPIMELATE EPIMERASE, CHLOROPLASTIC"/>
    <property type="match status" value="1"/>
</dbReference>
<dbReference type="Pfam" id="PF01678">
    <property type="entry name" value="DAP_epimerase"/>
    <property type="match status" value="2"/>
</dbReference>
<dbReference type="SUPFAM" id="SSF54506">
    <property type="entry name" value="Diaminopimelate epimerase-like"/>
    <property type="match status" value="1"/>
</dbReference>
<dbReference type="PROSITE" id="PS01326">
    <property type="entry name" value="DAP_EPIMERASE"/>
    <property type="match status" value="1"/>
</dbReference>
<feature type="chain" id="PRO_1000011835" description="Diaminopimelate epimerase">
    <location>
        <begin position="1"/>
        <end position="284"/>
    </location>
</feature>
<feature type="active site" description="Proton donor" evidence="1">
    <location>
        <position position="76"/>
    </location>
</feature>
<feature type="active site" description="Proton acceptor" evidence="1">
    <location>
        <position position="226"/>
    </location>
</feature>
<feature type="binding site" evidence="1">
    <location>
        <position position="14"/>
    </location>
    <ligand>
        <name>substrate</name>
    </ligand>
</feature>
<feature type="binding site" evidence="1">
    <location>
        <position position="67"/>
    </location>
    <ligand>
        <name>substrate</name>
    </ligand>
</feature>
<feature type="binding site" evidence="1">
    <location>
        <begin position="77"/>
        <end position="78"/>
    </location>
    <ligand>
        <name>substrate</name>
    </ligand>
</feature>
<feature type="binding site" evidence="1">
    <location>
        <position position="166"/>
    </location>
    <ligand>
        <name>substrate</name>
    </ligand>
</feature>
<feature type="binding site" evidence="1">
    <location>
        <position position="199"/>
    </location>
    <ligand>
        <name>substrate</name>
    </ligand>
</feature>
<feature type="binding site" evidence="1">
    <location>
        <begin position="217"/>
        <end position="218"/>
    </location>
    <ligand>
        <name>substrate</name>
    </ligand>
</feature>
<feature type="binding site" evidence="1">
    <location>
        <begin position="227"/>
        <end position="228"/>
    </location>
    <ligand>
        <name>substrate</name>
    </ligand>
</feature>
<feature type="site" description="Could be important to modulate the pK values of the two catalytic cysteine residues" evidence="1">
    <location>
        <position position="168"/>
    </location>
</feature>
<feature type="site" description="Could be important to modulate the pK values of the two catalytic cysteine residues" evidence="1">
    <location>
        <position position="217"/>
    </location>
</feature>
<accession>A7Z8D3</accession>
<proteinExistence type="inferred from homology"/>
<keyword id="KW-0028">Amino-acid biosynthesis</keyword>
<keyword id="KW-0963">Cytoplasm</keyword>
<keyword id="KW-0413">Isomerase</keyword>
<keyword id="KW-0457">Lysine biosynthesis</keyword>
<sequence length="284" mass="30917">MNSFRFTKMHGLGNSYIYVNQFEEQLPEERLAEIAVKVSSIHTGIGSDGMILICPSEKAPVKMRIFNNDGSEGKNCGNGLRCVAKYAYEHKLTEETSFFIETLSGLVKADITEDNGIVREVAVDMGEPRLTKKELPMLGNEDERTIDETFVFGETELSGTAVSMGNPHIVFPVADINQAPLTTLGPVIEKDPRFPEGVNVEFVETVSADELHFRVWERGSGITQACGTGACAAAVASVLNGVSERNRDITVHLAGGDLVINWQDNGHVLMTGPAETVCSGVYYL</sequence>
<protein>
    <recommendedName>
        <fullName evidence="1">Diaminopimelate epimerase</fullName>
        <shortName evidence="1">DAP epimerase</shortName>
        <ecNumber evidence="1">5.1.1.7</ecNumber>
    </recommendedName>
    <alternativeName>
        <fullName evidence="1">PLP-independent amino acid racemase</fullName>
    </alternativeName>
</protein>
<reference key="1">
    <citation type="journal article" date="2007" name="Nat. Biotechnol.">
        <title>Comparative analysis of the complete genome sequence of the plant growth-promoting bacterium Bacillus amyloliquefaciens FZB42.</title>
        <authorList>
            <person name="Chen X.H."/>
            <person name="Koumoutsi A."/>
            <person name="Scholz R."/>
            <person name="Eisenreich A."/>
            <person name="Schneider K."/>
            <person name="Heinemeyer I."/>
            <person name="Morgenstern B."/>
            <person name="Voss B."/>
            <person name="Hess W.R."/>
            <person name="Reva O."/>
            <person name="Junge H."/>
            <person name="Voigt B."/>
            <person name="Jungblut P.R."/>
            <person name="Vater J."/>
            <person name="Suessmuth R."/>
            <person name="Liesegang H."/>
            <person name="Strittmatter A."/>
            <person name="Gottschalk G."/>
            <person name="Borriss R."/>
        </authorList>
    </citation>
    <scope>NUCLEOTIDE SEQUENCE [LARGE SCALE GENOMIC DNA]</scope>
    <source>
        <strain>DSM 23117 / BGSC 10A6 / LMG 26770 / FZB42</strain>
    </source>
</reference>
<organism>
    <name type="scientific">Bacillus velezensis (strain DSM 23117 / BGSC 10A6 / LMG 26770 / FZB42)</name>
    <name type="common">Bacillus amyloliquefaciens subsp. plantarum</name>
    <dbReference type="NCBI Taxonomy" id="326423"/>
    <lineage>
        <taxon>Bacteria</taxon>
        <taxon>Bacillati</taxon>
        <taxon>Bacillota</taxon>
        <taxon>Bacilli</taxon>
        <taxon>Bacillales</taxon>
        <taxon>Bacillaceae</taxon>
        <taxon>Bacillus</taxon>
        <taxon>Bacillus amyloliquefaciens group</taxon>
    </lineage>
</organism>